<proteinExistence type="inferred from homology"/>
<organism>
    <name type="scientific">Citrifermentans bemidjiense (strain ATCC BAA-1014 / DSM 16622 / JCM 12645 / Bem)</name>
    <name type="common">Geobacter bemidjiensis</name>
    <dbReference type="NCBI Taxonomy" id="404380"/>
    <lineage>
        <taxon>Bacteria</taxon>
        <taxon>Pseudomonadati</taxon>
        <taxon>Thermodesulfobacteriota</taxon>
        <taxon>Desulfuromonadia</taxon>
        <taxon>Geobacterales</taxon>
        <taxon>Geobacteraceae</taxon>
        <taxon>Citrifermentans</taxon>
    </lineage>
</organism>
<evidence type="ECO:0000255" key="1">
    <source>
        <dbReference type="HAMAP-Rule" id="MF_01347"/>
    </source>
</evidence>
<name>ATPB_CITBB</name>
<sequence length="470" mass="51057">MSQNFGKISQVIGAVIDVEFEPGKLPPIYQALRVTNPAIDDQEFNLVLEVAQHLGENAVRTIAMDSTDGLVRGQQVKDMGKQISVPVGKKTLGRILNVIGEPVDEMGPIGNEKEYGIHREAPLFVNQSTKVEAFTTGIKVVDLLAPYARGGKIGLFGGAGVGKTVLIMELINNIAKQHGGFSVFAGVGERTREGNDLWMEMKESGVLDKAALVYGQMNEPPGARARVALSALSIAEYFRDEEGQDVLLFVDNIFRFTQAGSEVSALLGRIPSAVGYQPTLATEMGELQERITSTNKGSITSVQAIYVPADDLTDPAPATAFAHLDATTVLSRQIAELGIYPAVDPLDSTSRILDPQVIGDEHYAIARQVQYVLQKYKDLQDIIAILGMDELSEEDKLVVARARKIQKFLSQPFHVAEAFTGSPGKYVELKDTIKGFSEIIAGKHDDLPEQAFYMVGTIEEAIEKAQKLAV</sequence>
<gene>
    <name evidence="1" type="primary">atpD</name>
    <name type="ordered locus">Gbem_3950</name>
</gene>
<comment type="function">
    <text evidence="1">Produces ATP from ADP in the presence of a proton gradient across the membrane. The catalytic sites are hosted primarily by the beta subunits.</text>
</comment>
<comment type="catalytic activity">
    <reaction evidence="1">
        <text>ATP + H2O + 4 H(+)(in) = ADP + phosphate + 5 H(+)(out)</text>
        <dbReference type="Rhea" id="RHEA:57720"/>
        <dbReference type="ChEBI" id="CHEBI:15377"/>
        <dbReference type="ChEBI" id="CHEBI:15378"/>
        <dbReference type="ChEBI" id="CHEBI:30616"/>
        <dbReference type="ChEBI" id="CHEBI:43474"/>
        <dbReference type="ChEBI" id="CHEBI:456216"/>
        <dbReference type="EC" id="7.1.2.2"/>
    </reaction>
</comment>
<comment type="subunit">
    <text evidence="1">F-type ATPases have 2 components, CF(1) - the catalytic core - and CF(0) - the membrane proton channel. CF(1) has five subunits: alpha(3), beta(3), gamma(1), delta(1), epsilon(1). CF(0) has three main subunits: a(1), b(2) and c(9-12). The alpha and beta chains form an alternating ring which encloses part of the gamma chain. CF(1) is attached to CF(0) by a central stalk formed by the gamma and epsilon chains, while a peripheral stalk is formed by the delta and b chains.</text>
</comment>
<comment type="subcellular location">
    <subcellularLocation>
        <location evidence="1">Cell inner membrane</location>
        <topology evidence="1">Peripheral membrane protein</topology>
    </subcellularLocation>
</comment>
<comment type="similarity">
    <text evidence="1">Belongs to the ATPase alpha/beta chains family.</text>
</comment>
<dbReference type="EC" id="7.1.2.2" evidence="1"/>
<dbReference type="EMBL" id="CP001124">
    <property type="protein sequence ID" value="ACH40942.1"/>
    <property type="molecule type" value="Genomic_DNA"/>
</dbReference>
<dbReference type="RefSeq" id="WP_012532376.1">
    <property type="nucleotide sequence ID" value="NC_011146.1"/>
</dbReference>
<dbReference type="SMR" id="B5EFI7"/>
<dbReference type="STRING" id="404380.Gbem_3950"/>
<dbReference type="KEGG" id="gbm:Gbem_3950"/>
<dbReference type="eggNOG" id="COG0055">
    <property type="taxonomic scope" value="Bacteria"/>
</dbReference>
<dbReference type="HOGENOM" id="CLU_022398_0_2_7"/>
<dbReference type="OrthoDB" id="9801639at2"/>
<dbReference type="Proteomes" id="UP000008825">
    <property type="component" value="Chromosome"/>
</dbReference>
<dbReference type="GO" id="GO:0005886">
    <property type="term" value="C:plasma membrane"/>
    <property type="evidence" value="ECO:0007669"/>
    <property type="project" value="UniProtKB-SubCell"/>
</dbReference>
<dbReference type="GO" id="GO:0045259">
    <property type="term" value="C:proton-transporting ATP synthase complex"/>
    <property type="evidence" value="ECO:0007669"/>
    <property type="project" value="UniProtKB-KW"/>
</dbReference>
<dbReference type="GO" id="GO:0005524">
    <property type="term" value="F:ATP binding"/>
    <property type="evidence" value="ECO:0007669"/>
    <property type="project" value="UniProtKB-UniRule"/>
</dbReference>
<dbReference type="GO" id="GO:0016887">
    <property type="term" value="F:ATP hydrolysis activity"/>
    <property type="evidence" value="ECO:0007669"/>
    <property type="project" value="InterPro"/>
</dbReference>
<dbReference type="GO" id="GO:0046933">
    <property type="term" value="F:proton-transporting ATP synthase activity, rotational mechanism"/>
    <property type="evidence" value="ECO:0007669"/>
    <property type="project" value="UniProtKB-UniRule"/>
</dbReference>
<dbReference type="CDD" id="cd18110">
    <property type="entry name" value="ATP-synt_F1_beta_C"/>
    <property type="match status" value="1"/>
</dbReference>
<dbReference type="CDD" id="cd18115">
    <property type="entry name" value="ATP-synt_F1_beta_N"/>
    <property type="match status" value="1"/>
</dbReference>
<dbReference type="CDD" id="cd01133">
    <property type="entry name" value="F1-ATPase_beta_CD"/>
    <property type="match status" value="1"/>
</dbReference>
<dbReference type="FunFam" id="1.10.1140.10:FF:000001">
    <property type="entry name" value="ATP synthase subunit beta"/>
    <property type="match status" value="1"/>
</dbReference>
<dbReference type="FunFam" id="2.40.10.170:FF:000005">
    <property type="entry name" value="ATP synthase subunit beta"/>
    <property type="match status" value="1"/>
</dbReference>
<dbReference type="FunFam" id="3.40.50.300:FF:000026">
    <property type="entry name" value="ATP synthase subunit beta"/>
    <property type="match status" value="1"/>
</dbReference>
<dbReference type="Gene3D" id="2.40.10.170">
    <property type="match status" value="1"/>
</dbReference>
<dbReference type="Gene3D" id="1.10.1140.10">
    <property type="entry name" value="Bovine Mitochondrial F1-atpase, Atp Synthase Beta Chain, Chain D, domain 3"/>
    <property type="match status" value="1"/>
</dbReference>
<dbReference type="Gene3D" id="3.40.50.300">
    <property type="entry name" value="P-loop containing nucleotide triphosphate hydrolases"/>
    <property type="match status" value="1"/>
</dbReference>
<dbReference type="HAMAP" id="MF_01347">
    <property type="entry name" value="ATP_synth_beta_bact"/>
    <property type="match status" value="1"/>
</dbReference>
<dbReference type="InterPro" id="IPR003593">
    <property type="entry name" value="AAA+_ATPase"/>
</dbReference>
<dbReference type="InterPro" id="IPR055190">
    <property type="entry name" value="ATP-synt_VA_C"/>
</dbReference>
<dbReference type="InterPro" id="IPR005722">
    <property type="entry name" value="ATP_synth_F1_bsu"/>
</dbReference>
<dbReference type="InterPro" id="IPR020003">
    <property type="entry name" value="ATPase_a/bsu_AS"/>
</dbReference>
<dbReference type="InterPro" id="IPR050053">
    <property type="entry name" value="ATPase_alpha/beta_chains"/>
</dbReference>
<dbReference type="InterPro" id="IPR004100">
    <property type="entry name" value="ATPase_F1/V1/A1_a/bsu_N"/>
</dbReference>
<dbReference type="InterPro" id="IPR036121">
    <property type="entry name" value="ATPase_F1/V1/A1_a/bsu_N_sf"/>
</dbReference>
<dbReference type="InterPro" id="IPR000194">
    <property type="entry name" value="ATPase_F1/V1/A1_a/bsu_nucl-bd"/>
</dbReference>
<dbReference type="InterPro" id="IPR024034">
    <property type="entry name" value="ATPase_F1/V1_b/a_C"/>
</dbReference>
<dbReference type="InterPro" id="IPR027417">
    <property type="entry name" value="P-loop_NTPase"/>
</dbReference>
<dbReference type="NCBIfam" id="TIGR01039">
    <property type="entry name" value="atpD"/>
    <property type="match status" value="1"/>
</dbReference>
<dbReference type="PANTHER" id="PTHR15184">
    <property type="entry name" value="ATP SYNTHASE"/>
    <property type="match status" value="1"/>
</dbReference>
<dbReference type="PANTHER" id="PTHR15184:SF71">
    <property type="entry name" value="ATP SYNTHASE SUBUNIT BETA, MITOCHONDRIAL"/>
    <property type="match status" value="1"/>
</dbReference>
<dbReference type="Pfam" id="PF00006">
    <property type="entry name" value="ATP-synt_ab"/>
    <property type="match status" value="1"/>
</dbReference>
<dbReference type="Pfam" id="PF02874">
    <property type="entry name" value="ATP-synt_ab_N"/>
    <property type="match status" value="1"/>
</dbReference>
<dbReference type="Pfam" id="PF22919">
    <property type="entry name" value="ATP-synt_VA_C"/>
    <property type="match status" value="1"/>
</dbReference>
<dbReference type="PIRSF" id="PIRSF039072">
    <property type="entry name" value="ATPase_subunit_beta"/>
    <property type="match status" value="1"/>
</dbReference>
<dbReference type="SMART" id="SM00382">
    <property type="entry name" value="AAA"/>
    <property type="match status" value="1"/>
</dbReference>
<dbReference type="SUPFAM" id="SSF47917">
    <property type="entry name" value="C-terminal domain of alpha and beta subunits of F1 ATP synthase"/>
    <property type="match status" value="1"/>
</dbReference>
<dbReference type="SUPFAM" id="SSF50615">
    <property type="entry name" value="N-terminal domain of alpha and beta subunits of F1 ATP synthase"/>
    <property type="match status" value="1"/>
</dbReference>
<dbReference type="SUPFAM" id="SSF52540">
    <property type="entry name" value="P-loop containing nucleoside triphosphate hydrolases"/>
    <property type="match status" value="1"/>
</dbReference>
<dbReference type="PROSITE" id="PS00152">
    <property type="entry name" value="ATPASE_ALPHA_BETA"/>
    <property type="match status" value="1"/>
</dbReference>
<protein>
    <recommendedName>
        <fullName evidence="1">ATP synthase subunit beta</fullName>
        <ecNumber evidence="1">7.1.2.2</ecNumber>
    </recommendedName>
    <alternativeName>
        <fullName evidence="1">ATP synthase F1 sector subunit beta</fullName>
    </alternativeName>
    <alternativeName>
        <fullName evidence="1">F-ATPase subunit beta</fullName>
    </alternativeName>
</protein>
<feature type="chain" id="PRO_1000143511" description="ATP synthase subunit beta">
    <location>
        <begin position="1"/>
        <end position="470"/>
    </location>
</feature>
<feature type="binding site" evidence="1">
    <location>
        <begin position="157"/>
        <end position="164"/>
    </location>
    <ligand>
        <name>ATP</name>
        <dbReference type="ChEBI" id="CHEBI:30616"/>
    </ligand>
</feature>
<keyword id="KW-0066">ATP synthesis</keyword>
<keyword id="KW-0067">ATP-binding</keyword>
<keyword id="KW-0997">Cell inner membrane</keyword>
<keyword id="KW-1003">Cell membrane</keyword>
<keyword id="KW-0139">CF(1)</keyword>
<keyword id="KW-0375">Hydrogen ion transport</keyword>
<keyword id="KW-0406">Ion transport</keyword>
<keyword id="KW-0472">Membrane</keyword>
<keyword id="KW-0547">Nucleotide-binding</keyword>
<keyword id="KW-1185">Reference proteome</keyword>
<keyword id="KW-1278">Translocase</keyword>
<keyword id="KW-0813">Transport</keyword>
<reference key="1">
    <citation type="submission" date="2008-07" db="EMBL/GenBank/DDBJ databases">
        <title>Complete sequence of Geobacter bemidjiensis BEM.</title>
        <authorList>
            <consortium name="US DOE Joint Genome Institute"/>
            <person name="Lucas S."/>
            <person name="Copeland A."/>
            <person name="Lapidus A."/>
            <person name="Glavina del Rio T."/>
            <person name="Dalin E."/>
            <person name="Tice H."/>
            <person name="Bruce D."/>
            <person name="Goodwin L."/>
            <person name="Pitluck S."/>
            <person name="Kiss H."/>
            <person name="Brettin T."/>
            <person name="Detter J.C."/>
            <person name="Han C."/>
            <person name="Kuske C.R."/>
            <person name="Schmutz J."/>
            <person name="Larimer F."/>
            <person name="Land M."/>
            <person name="Hauser L."/>
            <person name="Kyrpides N."/>
            <person name="Lykidis A."/>
            <person name="Lovley D."/>
            <person name="Richardson P."/>
        </authorList>
    </citation>
    <scope>NUCLEOTIDE SEQUENCE [LARGE SCALE GENOMIC DNA]</scope>
    <source>
        <strain>ATCC BAA-1014 / DSM 16622 / JCM 12645 / Bem</strain>
    </source>
</reference>
<accession>B5EFI7</accession>